<organism>
    <name type="scientific">Oncorhynchus mykiss</name>
    <name type="common">Rainbow trout</name>
    <name type="synonym">Salmo gairdneri</name>
    <dbReference type="NCBI Taxonomy" id="8022"/>
    <lineage>
        <taxon>Eukaryota</taxon>
        <taxon>Metazoa</taxon>
        <taxon>Chordata</taxon>
        <taxon>Craniata</taxon>
        <taxon>Vertebrata</taxon>
        <taxon>Euteleostomi</taxon>
        <taxon>Actinopterygii</taxon>
        <taxon>Neopterygii</taxon>
        <taxon>Teleostei</taxon>
        <taxon>Protacanthopterygii</taxon>
        <taxon>Salmoniformes</taxon>
        <taxon>Salmonidae</taxon>
        <taxon>Salmoninae</taxon>
        <taxon>Oncorhynchus</taxon>
    </lineage>
</organism>
<keyword id="KW-1015">Disulfide bond</keyword>
<keyword id="KW-0597">Phosphoprotein</keyword>
<keyword id="KW-0964">Secreted</keyword>
<keyword id="KW-0732">Signal</keyword>
<sequence>MKWCVLMLALLQSLCCSGLPLYQSELASTADKALVVTMTQVNNLYAGLRLYRVTRGSIKRVVPLGLNTYDLMMNFGIKETDCLKSSGEDPQRCAFRVGFFVPAASCTARVRVTAELTQVVSLNCGQDSSSSESSSEENFTRKRQQLNVQPSGNRGPVLPGFSEATLFPSHSFSRQVEPQPIPRGDSIGNHLE</sequence>
<accession>Q70I47</accession>
<protein>
    <recommendedName>
        <fullName>Secreted phosphoprotein 24</fullName>
        <shortName>Spp-24</shortName>
    </recommendedName>
    <alternativeName>
        <fullName>Secreted phosphoprotein 2</fullName>
    </alternativeName>
</protein>
<proteinExistence type="evidence at transcript level"/>
<comment type="function">
    <text evidence="1">Could coordinate an aspect of bone turnover.</text>
</comment>
<comment type="subcellular location">
    <subcellularLocation>
        <location evidence="1">Secreted</location>
    </subcellularLocation>
</comment>
<comment type="PTM">
    <text evidence="1">Multiply phosphorylated at serine residues.</text>
</comment>
<comment type="similarity">
    <text evidence="4">Belongs to the SPP2 family.</text>
</comment>
<name>SPP24_ONCMY</name>
<evidence type="ECO:0000250" key="1"/>
<evidence type="ECO:0000255" key="2"/>
<evidence type="ECO:0000256" key="3">
    <source>
        <dbReference type="SAM" id="MobiDB-lite"/>
    </source>
</evidence>
<evidence type="ECO:0000305" key="4"/>
<gene>
    <name type="primary">spp2</name>
    <name type="synonym">spp24</name>
</gene>
<feature type="signal peptide" evidence="2">
    <location>
        <begin position="1"/>
        <end position="18"/>
    </location>
</feature>
<feature type="chain" id="PRO_0000228612" description="Secreted phosphoprotein 24">
    <location>
        <begin position="19"/>
        <end position="192"/>
    </location>
</feature>
<feature type="region of interest" description="Disordered" evidence="3">
    <location>
        <begin position="124"/>
        <end position="192"/>
    </location>
</feature>
<feature type="compositionally biased region" description="Low complexity" evidence="3">
    <location>
        <begin position="128"/>
        <end position="137"/>
    </location>
</feature>
<feature type="disulfide bond" evidence="1">
    <location>
        <begin position="82"/>
        <end position="93"/>
    </location>
</feature>
<feature type="disulfide bond" evidence="1">
    <location>
        <begin position="106"/>
        <end position="124"/>
    </location>
</feature>
<dbReference type="EMBL" id="AJ580808">
    <property type="protein sequence ID" value="CAE45341.1"/>
    <property type="molecule type" value="mRNA"/>
</dbReference>
<dbReference type="RefSeq" id="NP_001117870.1">
    <property type="nucleotide sequence ID" value="NM_001124398.1"/>
</dbReference>
<dbReference type="Ensembl" id="ENSOMYT00000016476.2">
    <property type="protein sequence ID" value="ENSOMYP00000014912.2"/>
    <property type="gene ID" value="ENSOMYG00000007382.2"/>
</dbReference>
<dbReference type="GeneID" id="100136098"/>
<dbReference type="KEGG" id="omy:100136098"/>
<dbReference type="CTD" id="6694"/>
<dbReference type="GeneTree" id="ENSGT00390000009001"/>
<dbReference type="OrthoDB" id="9944258at2759"/>
<dbReference type="Proteomes" id="UP000694395">
    <property type="component" value="Chromosome 7"/>
</dbReference>
<dbReference type="GO" id="GO:0005576">
    <property type="term" value="C:extracellular region"/>
    <property type="evidence" value="ECO:0007669"/>
    <property type="project" value="UniProtKB-SubCell"/>
</dbReference>
<dbReference type="GO" id="GO:0046849">
    <property type="term" value="P:bone remodeling"/>
    <property type="evidence" value="ECO:0007669"/>
    <property type="project" value="InterPro"/>
</dbReference>
<dbReference type="Gene3D" id="3.10.450.10">
    <property type="match status" value="1"/>
</dbReference>
<dbReference type="InterPro" id="IPR046350">
    <property type="entry name" value="Cystatin_sf"/>
</dbReference>
<dbReference type="InterPro" id="IPR010892">
    <property type="entry name" value="Spp-24"/>
</dbReference>
<dbReference type="PANTHER" id="PTHR15444">
    <property type="entry name" value="SECRETED PHOSPHOPROTEIN 24"/>
    <property type="match status" value="1"/>
</dbReference>
<dbReference type="PANTHER" id="PTHR15444:SF4">
    <property type="entry name" value="SECRETED PHOSPHOPROTEIN 24"/>
    <property type="match status" value="1"/>
</dbReference>
<dbReference type="Pfam" id="PF07448">
    <property type="entry name" value="Spp-24"/>
    <property type="match status" value="1"/>
</dbReference>
<dbReference type="SUPFAM" id="SSF54403">
    <property type="entry name" value="Cystatin/monellin"/>
    <property type="match status" value="1"/>
</dbReference>
<reference key="1">
    <citation type="journal article" date="2004" name="Matrix Biol.">
        <title>Characterization of the human secreted phosphoprotein 24 gene (SPP2) and comparison of the protein sequence in nine species.</title>
        <authorList>
            <person name="Bennett C.S."/>
            <person name="Khorram Khorshid H.R."/>
            <person name="Kitchen J.A."/>
            <person name="Arteta D."/>
            <person name="Dalgleish R."/>
        </authorList>
    </citation>
    <scope>NUCLEOTIDE SEQUENCE [MRNA]</scope>
</reference>